<comment type="function">
    <text evidence="1">Catalyzes the ATP-dependent conversion of 7-carboxy-7-deazaguanine (CDG) to 7-cyano-7-deazaguanine (preQ(0)).</text>
</comment>
<comment type="catalytic activity">
    <reaction evidence="1">
        <text>7-carboxy-7-deazaguanine + NH4(+) + ATP = 7-cyano-7-deazaguanine + ADP + phosphate + H2O + H(+)</text>
        <dbReference type="Rhea" id="RHEA:27982"/>
        <dbReference type="ChEBI" id="CHEBI:15377"/>
        <dbReference type="ChEBI" id="CHEBI:15378"/>
        <dbReference type="ChEBI" id="CHEBI:28938"/>
        <dbReference type="ChEBI" id="CHEBI:30616"/>
        <dbReference type="ChEBI" id="CHEBI:43474"/>
        <dbReference type="ChEBI" id="CHEBI:45075"/>
        <dbReference type="ChEBI" id="CHEBI:61036"/>
        <dbReference type="ChEBI" id="CHEBI:456216"/>
        <dbReference type="EC" id="6.3.4.20"/>
    </reaction>
</comment>
<comment type="cofactor">
    <cofactor evidence="1">
        <name>Zn(2+)</name>
        <dbReference type="ChEBI" id="CHEBI:29105"/>
    </cofactor>
    <text evidence="1">Binds 1 zinc ion per subunit.</text>
</comment>
<comment type="pathway">
    <text evidence="1">Purine metabolism; 7-cyano-7-deazaguanine biosynthesis.</text>
</comment>
<comment type="subunit">
    <text evidence="1">Homodimer.</text>
</comment>
<comment type="similarity">
    <text evidence="1">Belongs to the QueC family.</text>
</comment>
<proteinExistence type="inferred from homology"/>
<evidence type="ECO:0000255" key="1">
    <source>
        <dbReference type="HAMAP-Rule" id="MF_01633"/>
    </source>
</evidence>
<organism>
    <name type="scientific">Carboxydothermus hydrogenoformans (strain ATCC BAA-161 / DSM 6008 / Z-2901)</name>
    <dbReference type="NCBI Taxonomy" id="246194"/>
    <lineage>
        <taxon>Bacteria</taxon>
        <taxon>Bacillati</taxon>
        <taxon>Bacillota</taxon>
        <taxon>Clostridia</taxon>
        <taxon>Thermoanaerobacterales</taxon>
        <taxon>Thermoanaerobacteraceae</taxon>
        <taxon>Carboxydothermus</taxon>
    </lineage>
</organism>
<accession>Q3ADI5</accession>
<keyword id="KW-0067">ATP-binding</keyword>
<keyword id="KW-0436">Ligase</keyword>
<keyword id="KW-0479">Metal-binding</keyword>
<keyword id="KW-0547">Nucleotide-binding</keyword>
<keyword id="KW-0671">Queuosine biosynthesis</keyword>
<keyword id="KW-1185">Reference proteome</keyword>
<keyword id="KW-0862">Zinc</keyword>
<dbReference type="EC" id="6.3.4.20" evidence="1"/>
<dbReference type="EMBL" id="CP000141">
    <property type="protein sequence ID" value="ABB15778.1"/>
    <property type="molecule type" value="Genomic_DNA"/>
</dbReference>
<dbReference type="RefSeq" id="WP_011343875.1">
    <property type="nucleotide sequence ID" value="NC_007503.1"/>
</dbReference>
<dbReference type="SMR" id="Q3ADI5"/>
<dbReference type="FunCoup" id="Q3ADI5">
    <property type="interactions" value="162"/>
</dbReference>
<dbReference type="STRING" id="246194.CHY_0952"/>
<dbReference type="KEGG" id="chy:CHY_0952"/>
<dbReference type="eggNOG" id="COG0603">
    <property type="taxonomic scope" value="Bacteria"/>
</dbReference>
<dbReference type="HOGENOM" id="CLU_081854_1_0_9"/>
<dbReference type="InParanoid" id="Q3ADI5"/>
<dbReference type="OrthoDB" id="9789567at2"/>
<dbReference type="UniPathway" id="UPA00391"/>
<dbReference type="Proteomes" id="UP000002706">
    <property type="component" value="Chromosome"/>
</dbReference>
<dbReference type="GO" id="GO:0005524">
    <property type="term" value="F:ATP binding"/>
    <property type="evidence" value="ECO:0007669"/>
    <property type="project" value="UniProtKB-UniRule"/>
</dbReference>
<dbReference type="GO" id="GO:0016879">
    <property type="term" value="F:ligase activity, forming carbon-nitrogen bonds"/>
    <property type="evidence" value="ECO:0007669"/>
    <property type="project" value="UniProtKB-UniRule"/>
</dbReference>
<dbReference type="GO" id="GO:0008270">
    <property type="term" value="F:zinc ion binding"/>
    <property type="evidence" value="ECO:0007669"/>
    <property type="project" value="UniProtKB-UniRule"/>
</dbReference>
<dbReference type="GO" id="GO:0008616">
    <property type="term" value="P:queuosine biosynthetic process"/>
    <property type="evidence" value="ECO:0007669"/>
    <property type="project" value="UniProtKB-UniRule"/>
</dbReference>
<dbReference type="CDD" id="cd01995">
    <property type="entry name" value="QueC-like"/>
    <property type="match status" value="1"/>
</dbReference>
<dbReference type="Gene3D" id="3.40.50.620">
    <property type="entry name" value="HUPs"/>
    <property type="match status" value="1"/>
</dbReference>
<dbReference type="HAMAP" id="MF_01633">
    <property type="entry name" value="QueC"/>
    <property type="match status" value="1"/>
</dbReference>
<dbReference type="InterPro" id="IPR018317">
    <property type="entry name" value="QueC"/>
</dbReference>
<dbReference type="InterPro" id="IPR014729">
    <property type="entry name" value="Rossmann-like_a/b/a_fold"/>
</dbReference>
<dbReference type="NCBIfam" id="TIGR00364">
    <property type="entry name" value="7-cyano-7-deazaguanine synthase QueC"/>
    <property type="match status" value="1"/>
</dbReference>
<dbReference type="PANTHER" id="PTHR42914">
    <property type="entry name" value="7-CYANO-7-DEAZAGUANINE SYNTHASE"/>
    <property type="match status" value="1"/>
</dbReference>
<dbReference type="PANTHER" id="PTHR42914:SF1">
    <property type="entry name" value="7-CYANO-7-DEAZAGUANINE SYNTHASE"/>
    <property type="match status" value="1"/>
</dbReference>
<dbReference type="Pfam" id="PF06508">
    <property type="entry name" value="QueC"/>
    <property type="match status" value="1"/>
</dbReference>
<dbReference type="PIRSF" id="PIRSF006293">
    <property type="entry name" value="ExsB"/>
    <property type="match status" value="1"/>
</dbReference>
<dbReference type="SUPFAM" id="SSF52402">
    <property type="entry name" value="Adenine nucleotide alpha hydrolases-like"/>
    <property type="match status" value="1"/>
</dbReference>
<name>QUEC_CARHZ</name>
<sequence length="215" mass="23770">MEKAIVLLSAGLDSTVSLAYGVRNFQVVLGLTFNYGQKASRKEIEHSKKILDYYGIPQEVIELPFLKKITKTSLVAEDQEIPTGIDLESAAAVKTSMEKVWVPNRNGLFINIAAAYAESLGAKYIITGFNAEEAKTFSDNSREFVDAVNHALKYSTLNHVQVVSFTQNLEKSEIYRLGVELGAPLDLIWSCYYGGDEMCGVCESCLRLKRARGGN</sequence>
<gene>
    <name evidence="1" type="primary">queC</name>
    <name type="ordered locus">CHY_0952</name>
</gene>
<protein>
    <recommendedName>
        <fullName evidence="1">7-cyano-7-deazaguanine synthase</fullName>
        <ecNumber evidence="1">6.3.4.20</ecNumber>
    </recommendedName>
    <alternativeName>
        <fullName evidence="1">7-cyano-7-carbaguanine synthase</fullName>
    </alternativeName>
    <alternativeName>
        <fullName evidence="1">PreQ(0) synthase</fullName>
    </alternativeName>
    <alternativeName>
        <fullName evidence="1">Queuosine biosynthesis protein QueC</fullName>
    </alternativeName>
</protein>
<reference key="1">
    <citation type="journal article" date="2005" name="PLoS Genet.">
        <title>Life in hot carbon monoxide: the complete genome sequence of Carboxydothermus hydrogenoformans Z-2901.</title>
        <authorList>
            <person name="Wu M."/>
            <person name="Ren Q."/>
            <person name="Durkin A.S."/>
            <person name="Daugherty S.C."/>
            <person name="Brinkac L.M."/>
            <person name="Dodson R.J."/>
            <person name="Madupu R."/>
            <person name="Sullivan S.A."/>
            <person name="Kolonay J.F."/>
            <person name="Nelson W.C."/>
            <person name="Tallon L.J."/>
            <person name="Jones K.M."/>
            <person name="Ulrich L.E."/>
            <person name="Gonzalez J.M."/>
            <person name="Zhulin I.B."/>
            <person name="Robb F.T."/>
            <person name="Eisen J.A."/>
        </authorList>
    </citation>
    <scope>NUCLEOTIDE SEQUENCE [LARGE SCALE GENOMIC DNA]</scope>
    <source>
        <strain>ATCC BAA-161 / DSM 6008 / Z-2901</strain>
    </source>
</reference>
<feature type="chain" id="PRO_0000246824" description="7-cyano-7-deazaguanine synthase">
    <location>
        <begin position="1"/>
        <end position="215"/>
    </location>
</feature>
<feature type="binding site" evidence="1">
    <location>
        <begin position="8"/>
        <end position="18"/>
    </location>
    <ligand>
        <name>ATP</name>
        <dbReference type="ChEBI" id="CHEBI:30616"/>
    </ligand>
</feature>
<feature type="binding site" evidence="1">
    <location>
        <position position="191"/>
    </location>
    <ligand>
        <name>Zn(2+)</name>
        <dbReference type="ChEBI" id="CHEBI:29105"/>
    </ligand>
</feature>
<feature type="binding site" evidence="1">
    <location>
        <position position="199"/>
    </location>
    <ligand>
        <name>Zn(2+)</name>
        <dbReference type="ChEBI" id="CHEBI:29105"/>
    </ligand>
</feature>
<feature type="binding site" evidence="1">
    <location>
        <position position="202"/>
    </location>
    <ligand>
        <name>Zn(2+)</name>
        <dbReference type="ChEBI" id="CHEBI:29105"/>
    </ligand>
</feature>
<feature type="binding site" evidence="1">
    <location>
        <position position="205"/>
    </location>
    <ligand>
        <name>Zn(2+)</name>
        <dbReference type="ChEBI" id="CHEBI:29105"/>
    </ligand>
</feature>